<keyword id="KW-0066">ATP synthesis</keyword>
<keyword id="KW-0997">Cell inner membrane</keyword>
<keyword id="KW-1003">Cell membrane</keyword>
<keyword id="KW-0138">CF(0)</keyword>
<keyword id="KW-0375">Hydrogen ion transport</keyword>
<keyword id="KW-0406">Ion transport</keyword>
<keyword id="KW-0446">Lipid-binding</keyword>
<keyword id="KW-0472">Membrane</keyword>
<keyword id="KW-0614">Plasmid</keyword>
<keyword id="KW-0812">Transmembrane</keyword>
<keyword id="KW-1133">Transmembrane helix</keyword>
<keyword id="KW-0813">Transport</keyword>
<sequence>MGKFIGAGLATIGLGGAGIGVGHVAGNFLAGALRNPSAAPGQMANLFVGIAFAEALGIFSFLIALLLMFAV</sequence>
<proteinExistence type="inferred from homology"/>
<dbReference type="EMBL" id="CP000577">
    <property type="protein sequence ID" value="ABN77800.1"/>
    <property type="molecule type" value="Genomic_DNA"/>
</dbReference>
<dbReference type="SMR" id="A3PN84"/>
<dbReference type="KEGG" id="rsh:Rsph17029_2698"/>
<dbReference type="HOGENOM" id="CLU_148047_4_0_5"/>
<dbReference type="GO" id="GO:0005886">
    <property type="term" value="C:plasma membrane"/>
    <property type="evidence" value="ECO:0007669"/>
    <property type="project" value="UniProtKB-SubCell"/>
</dbReference>
<dbReference type="GO" id="GO:0045259">
    <property type="term" value="C:proton-transporting ATP synthase complex"/>
    <property type="evidence" value="ECO:0007669"/>
    <property type="project" value="UniProtKB-KW"/>
</dbReference>
<dbReference type="GO" id="GO:0033177">
    <property type="term" value="C:proton-transporting two-sector ATPase complex, proton-transporting domain"/>
    <property type="evidence" value="ECO:0007669"/>
    <property type="project" value="InterPro"/>
</dbReference>
<dbReference type="GO" id="GO:0008289">
    <property type="term" value="F:lipid binding"/>
    <property type="evidence" value="ECO:0007669"/>
    <property type="project" value="UniProtKB-KW"/>
</dbReference>
<dbReference type="GO" id="GO:0046933">
    <property type="term" value="F:proton-transporting ATP synthase activity, rotational mechanism"/>
    <property type="evidence" value="ECO:0007669"/>
    <property type="project" value="UniProtKB-UniRule"/>
</dbReference>
<dbReference type="Gene3D" id="1.20.20.10">
    <property type="entry name" value="F1F0 ATP synthase subunit C"/>
    <property type="match status" value="1"/>
</dbReference>
<dbReference type="HAMAP" id="MF_01396">
    <property type="entry name" value="ATP_synth_c_bact"/>
    <property type="match status" value="1"/>
</dbReference>
<dbReference type="InterPro" id="IPR000454">
    <property type="entry name" value="ATP_synth_F0_csu"/>
</dbReference>
<dbReference type="InterPro" id="IPR038662">
    <property type="entry name" value="ATP_synth_F0_csu_sf"/>
</dbReference>
<dbReference type="InterPro" id="IPR002379">
    <property type="entry name" value="ATPase_proteolipid_c-like_dom"/>
</dbReference>
<dbReference type="InterPro" id="IPR035921">
    <property type="entry name" value="F/V-ATP_Csub_sf"/>
</dbReference>
<dbReference type="NCBIfam" id="NF005733">
    <property type="entry name" value="PRK07558.1"/>
    <property type="match status" value="1"/>
</dbReference>
<dbReference type="PANTHER" id="PTHR10031">
    <property type="entry name" value="ATP SYNTHASE LIPID-BINDING PROTEIN, MITOCHONDRIAL"/>
    <property type="match status" value="1"/>
</dbReference>
<dbReference type="PANTHER" id="PTHR10031:SF0">
    <property type="entry name" value="ATPASE PROTEIN 9"/>
    <property type="match status" value="1"/>
</dbReference>
<dbReference type="Pfam" id="PF00137">
    <property type="entry name" value="ATP-synt_C"/>
    <property type="match status" value="1"/>
</dbReference>
<dbReference type="PRINTS" id="PR00124">
    <property type="entry name" value="ATPASEC"/>
</dbReference>
<dbReference type="SUPFAM" id="SSF81333">
    <property type="entry name" value="F1F0 ATP synthase subunit C"/>
    <property type="match status" value="1"/>
</dbReference>
<feature type="chain" id="PRO_0000365922" description="ATP synthase subunit c 1">
    <location>
        <begin position="1"/>
        <end position="71"/>
    </location>
</feature>
<feature type="transmembrane region" description="Helical" evidence="1">
    <location>
        <begin position="4"/>
        <end position="24"/>
    </location>
</feature>
<feature type="transmembrane region" description="Helical" evidence="1">
    <location>
        <begin position="46"/>
        <end position="66"/>
    </location>
</feature>
<feature type="site" description="Reversibly protonated during proton transport" evidence="1">
    <location>
        <position position="54"/>
    </location>
</feature>
<name>ATPL1_CERS1</name>
<accession>A3PN84</accession>
<protein>
    <recommendedName>
        <fullName evidence="1">ATP synthase subunit c 1</fullName>
    </recommendedName>
    <alternativeName>
        <fullName evidence="1">ATP synthase F(0) sector subunit c 1</fullName>
    </alternativeName>
    <alternativeName>
        <fullName evidence="1">F-type ATPase subunit c 1</fullName>
        <shortName evidence="1">F-ATPase subunit c 1</shortName>
    </alternativeName>
    <alternativeName>
        <fullName evidence="1">Lipid-binding protein 1</fullName>
    </alternativeName>
</protein>
<organism>
    <name type="scientific">Cereibacter sphaeroides (strain ATCC 17029 / ATH 2.4.9)</name>
    <name type="common">Rhodobacter sphaeroides</name>
    <dbReference type="NCBI Taxonomy" id="349101"/>
    <lineage>
        <taxon>Bacteria</taxon>
        <taxon>Pseudomonadati</taxon>
        <taxon>Pseudomonadota</taxon>
        <taxon>Alphaproteobacteria</taxon>
        <taxon>Rhodobacterales</taxon>
        <taxon>Paracoccaceae</taxon>
        <taxon>Cereibacter</taxon>
    </lineage>
</organism>
<comment type="function">
    <text evidence="1">F(1)F(0) ATP synthase produces ATP from ADP in the presence of a proton or sodium gradient. F-type ATPases consist of two structural domains, F(1) containing the extramembraneous catalytic core and F(0) containing the membrane proton channel, linked together by a central stalk and a peripheral stalk. During catalysis, ATP synthesis in the catalytic domain of F(1) is coupled via a rotary mechanism of the central stalk subunits to proton translocation.</text>
</comment>
<comment type="function">
    <text evidence="1">Key component of the F(0) channel; it plays a direct role in translocation across the membrane. A homomeric c-ring of between 10-14 subunits forms the central stalk rotor element with the F(1) delta and epsilon subunits.</text>
</comment>
<comment type="subunit">
    <text evidence="1">F-type ATPases have 2 components, F(1) - the catalytic core - and F(0) - the membrane proton channel. F(1) has five subunits: alpha(3), beta(3), gamma(1), delta(1), epsilon(1). F(0) has four main subunits: a(1), b(1), b'(1) and c(10-14). The alpha and beta chains form an alternating ring which encloses part of the gamma chain. F(1) is attached to F(0) by a central stalk formed by the gamma and epsilon chains, while a peripheral stalk is formed by the delta, b and b' chains.</text>
</comment>
<comment type="subcellular location">
    <subcellularLocation>
        <location evidence="1">Cell inner membrane</location>
        <topology evidence="1">Multi-pass membrane protein</topology>
    </subcellularLocation>
</comment>
<comment type="similarity">
    <text evidence="1">Belongs to the ATPase C chain family.</text>
</comment>
<evidence type="ECO:0000255" key="1">
    <source>
        <dbReference type="HAMAP-Rule" id="MF_01396"/>
    </source>
</evidence>
<gene>
    <name evidence="1" type="primary">atpE1</name>
    <name type="ordered locus">Rsph17029_2698</name>
</gene>
<reference key="1">
    <citation type="submission" date="2007-02" db="EMBL/GenBank/DDBJ databases">
        <title>Complete sequence of chromosome 1 of Rhodobacter sphaeroides ATCC 17029.</title>
        <authorList>
            <person name="Copeland A."/>
            <person name="Lucas S."/>
            <person name="Lapidus A."/>
            <person name="Barry K."/>
            <person name="Detter J.C."/>
            <person name="Glavina del Rio T."/>
            <person name="Hammon N."/>
            <person name="Israni S."/>
            <person name="Dalin E."/>
            <person name="Tice H."/>
            <person name="Pitluck S."/>
            <person name="Kiss H."/>
            <person name="Brettin T."/>
            <person name="Bruce D."/>
            <person name="Han C."/>
            <person name="Tapia R."/>
            <person name="Gilna P."/>
            <person name="Schmutz J."/>
            <person name="Larimer F."/>
            <person name="Land M."/>
            <person name="Hauser L."/>
            <person name="Kyrpides N."/>
            <person name="Mikhailova N."/>
            <person name="Richardson P."/>
            <person name="Mackenzie C."/>
            <person name="Choudhary M."/>
            <person name="Donohue T.J."/>
            <person name="Kaplan S."/>
        </authorList>
    </citation>
    <scope>NUCLEOTIDE SEQUENCE [LARGE SCALE GENOMIC DNA]</scope>
    <source>
        <strain>ATCC 17029 / ATH 2.4.9</strain>
    </source>
</reference>